<sequence length="508" mass="56117">MGLPWYRVHTVVLNDPGRLISVHIMHTALVAGWAGSMALYELAVFDPSDPVLDPMWRQGMFVIPFMTRLGITNSWGGWSITGGTITNPGIWSYEGVAGAHIVFSGLCFLAAIWHWVYWDLEIFCDERTGKPSLDLPKIFGIHLFLSGLACFGFGAFHVTGLYGPGIWVSDPYGLTGKVQSVNPAWGVEGFDPFVPGGIASHHIAAGTLGILAGLFHLSVRPPQRLYKGLRMGNIETVLSSSIAAVFFAAFVVAGTMWYGSATTPIELFGPTRYQWDQGYFQQEIYRRVGAGLAENQSLSEAWSKIPEKLAFYDYIGNNPAKGGLFRAGSMDNGDGIAVGWLGHPIFRDKEGRELFVRRMPTFFETFPVVLVDGDGIVRADVPFRRAESKYSVEQVGVTVEFYGGELNGVSYSDPATVKKYARRAQLGEIFELDRATLKSDGVFRSSPRGWFTFGHASFALLFFFGHIWHGARTLFRDVFAGIDPDLDAQVEFGTFQKLGDPTTRRQVV</sequence>
<accession>Q0ZIZ3</accession>
<evidence type="ECO:0000255" key="1">
    <source>
        <dbReference type="HAMAP-Rule" id="MF_01495"/>
    </source>
</evidence>
<gene>
    <name evidence="1" type="primary">psbB</name>
</gene>
<name>PSBB_VITVI</name>
<keyword id="KW-0148">Chlorophyll</keyword>
<keyword id="KW-0150">Chloroplast</keyword>
<keyword id="KW-0157">Chromophore</keyword>
<keyword id="KW-0472">Membrane</keyword>
<keyword id="KW-0602">Photosynthesis</keyword>
<keyword id="KW-0604">Photosystem II</keyword>
<keyword id="KW-0934">Plastid</keyword>
<keyword id="KW-1185">Reference proteome</keyword>
<keyword id="KW-0793">Thylakoid</keyword>
<keyword id="KW-0812">Transmembrane</keyword>
<keyword id="KW-1133">Transmembrane helix</keyword>
<comment type="function">
    <text evidence="1">One of the components of the core complex of photosystem II (PSII). It binds chlorophyll and helps catalyze the primary light-induced photochemical processes of PSII. PSII is a light-driven water:plastoquinone oxidoreductase, using light energy to abstract electrons from H(2)O, generating O(2) and a proton gradient subsequently used for ATP formation.</text>
</comment>
<comment type="cofactor">
    <text evidence="1">Binds multiple chlorophylls. PSII binds additional chlorophylls, carotenoids and specific lipids.</text>
</comment>
<comment type="subunit">
    <text evidence="1">PSII is composed of 1 copy each of membrane proteins PsbA, PsbB, PsbC, PsbD, PsbE, PsbF, PsbH, PsbI, PsbJ, PsbK, PsbL, PsbM, PsbT, PsbX, PsbY, PsbZ, Psb30/Ycf12, at least 3 peripheral proteins of the oxygen-evolving complex and a large number of cofactors. It forms dimeric complexes.</text>
</comment>
<comment type="subcellular location">
    <subcellularLocation>
        <location evidence="1">Plastid</location>
        <location evidence="1">Chloroplast thylakoid membrane</location>
        <topology evidence="1">Multi-pass membrane protein</topology>
    </subcellularLocation>
</comment>
<comment type="similarity">
    <text evidence="1">Belongs to the PsbB/PsbC family. PsbB subfamily.</text>
</comment>
<dbReference type="EMBL" id="DQ424856">
    <property type="protein sequence ID" value="ABE47559.1"/>
    <property type="molecule type" value="Genomic_DNA"/>
</dbReference>
<dbReference type="RefSeq" id="YP_567103.1">
    <property type="nucleotide sequence ID" value="NC_007957.1"/>
</dbReference>
<dbReference type="SMR" id="Q0ZIZ3"/>
<dbReference type="FunCoup" id="Q0ZIZ3">
    <property type="interactions" value="344"/>
</dbReference>
<dbReference type="STRING" id="29760.Q0ZIZ3"/>
<dbReference type="PaxDb" id="29760-VIT_00s2608g00010.t01"/>
<dbReference type="GeneID" id="4025125"/>
<dbReference type="KEGG" id="vvi:4025125"/>
<dbReference type="eggNOG" id="ENOG502QRV6">
    <property type="taxonomic scope" value="Eukaryota"/>
</dbReference>
<dbReference type="InParanoid" id="Q0ZIZ3"/>
<dbReference type="OrthoDB" id="375at2759"/>
<dbReference type="Proteomes" id="UP000009183">
    <property type="component" value="Chloroplast"/>
</dbReference>
<dbReference type="ExpressionAtlas" id="Q0ZIZ3">
    <property type="expression patterns" value="baseline and differential"/>
</dbReference>
<dbReference type="GO" id="GO:0009535">
    <property type="term" value="C:chloroplast thylakoid membrane"/>
    <property type="evidence" value="ECO:0007669"/>
    <property type="project" value="UniProtKB-SubCell"/>
</dbReference>
<dbReference type="GO" id="GO:0009523">
    <property type="term" value="C:photosystem II"/>
    <property type="evidence" value="ECO:0007669"/>
    <property type="project" value="UniProtKB-KW"/>
</dbReference>
<dbReference type="GO" id="GO:0016168">
    <property type="term" value="F:chlorophyll binding"/>
    <property type="evidence" value="ECO:0007669"/>
    <property type="project" value="UniProtKB-UniRule"/>
</dbReference>
<dbReference type="GO" id="GO:0045156">
    <property type="term" value="F:electron transporter, transferring electrons within the cyclic electron transport pathway of photosynthesis activity"/>
    <property type="evidence" value="ECO:0007669"/>
    <property type="project" value="InterPro"/>
</dbReference>
<dbReference type="GO" id="GO:0009772">
    <property type="term" value="P:photosynthetic electron transport in photosystem II"/>
    <property type="evidence" value="ECO:0007669"/>
    <property type="project" value="InterPro"/>
</dbReference>
<dbReference type="FunFam" id="3.10.680.10:FF:000001">
    <property type="entry name" value="Photosystem II CP47 reaction center protein"/>
    <property type="match status" value="1"/>
</dbReference>
<dbReference type="Gene3D" id="3.10.680.10">
    <property type="entry name" value="Photosystem II CP47 reaction center protein"/>
    <property type="match status" value="1"/>
</dbReference>
<dbReference type="HAMAP" id="MF_01495">
    <property type="entry name" value="PSII_PsbB_CP47"/>
    <property type="match status" value="1"/>
</dbReference>
<dbReference type="InterPro" id="IPR000932">
    <property type="entry name" value="PS_antenna-like"/>
</dbReference>
<dbReference type="InterPro" id="IPR036001">
    <property type="entry name" value="PS_II_antenna-like_sf"/>
</dbReference>
<dbReference type="InterPro" id="IPR017486">
    <property type="entry name" value="PSII_PsbB"/>
</dbReference>
<dbReference type="NCBIfam" id="TIGR03039">
    <property type="entry name" value="PS_II_CP47"/>
    <property type="match status" value="1"/>
</dbReference>
<dbReference type="PANTHER" id="PTHR33180">
    <property type="entry name" value="PHOTOSYSTEM II CP43 REACTION CENTER PROTEIN"/>
    <property type="match status" value="1"/>
</dbReference>
<dbReference type="PANTHER" id="PTHR33180:SF38">
    <property type="entry name" value="PHOTOSYSTEM II CP47 REACTION CENTER PROTEIN"/>
    <property type="match status" value="1"/>
</dbReference>
<dbReference type="Pfam" id="PF00421">
    <property type="entry name" value="PSII"/>
    <property type="match status" value="1"/>
</dbReference>
<dbReference type="SUPFAM" id="SSF161077">
    <property type="entry name" value="Photosystem II antenna protein-like"/>
    <property type="match status" value="1"/>
</dbReference>
<feature type="chain" id="PRO_0000359866" description="Photosystem II CP47 reaction center protein">
    <location>
        <begin position="1"/>
        <end position="508"/>
    </location>
</feature>
<feature type="transmembrane region" description="Helical" evidence="1">
    <location>
        <begin position="21"/>
        <end position="36"/>
    </location>
</feature>
<feature type="transmembrane region" description="Helical" evidence="1">
    <location>
        <begin position="101"/>
        <end position="115"/>
    </location>
</feature>
<feature type="transmembrane region" description="Helical" evidence="1">
    <location>
        <begin position="140"/>
        <end position="156"/>
    </location>
</feature>
<feature type="transmembrane region" description="Helical" evidence="1">
    <location>
        <begin position="203"/>
        <end position="218"/>
    </location>
</feature>
<feature type="transmembrane region" description="Helical" evidence="1">
    <location>
        <begin position="237"/>
        <end position="252"/>
    </location>
</feature>
<feature type="transmembrane region" description="Helical" evidence="1">
    <location>
        <begin position="457"/>
        <end position="472"/>
    </location>
</feature>
<organism>
    <name type="scientific">Vitis vinifera</name>
    <name type="common">Grape</name>
    <dbReference type="NCBI Taxonomy" id="29760"/>
    <lineage>
        <taxon>Eukaryota</taxon>
        <taxon>Viridiplantae</taxon>
        <taxon>Streptophyta</taxon>
        <taxon>Embryophyta</taxon>
        <taxon>Tracheophyta</taxon>
        <taxon>Spermatophyta</taxon>
        <taxon>Magnoliopsida</taxon>
        <taxon>eudicotyledons</taxon>
        <taxon>Gunneridae</taxon>
        <taxon>Pentapetalae</taxon>
        <taxon>rosids</taxon>
        <taxon>Vitales</taxon>
        <taxon>Vitaceae</taxon>
        <taxon>Viteae</taxon>
        <taxon>Vitis</taxon>
    </lineage>
</organism>
<reference key="1">
    <citation type="journal article" date="2006" name="BMC Evol. Biol.">
        <title>Phylogenetic analyses of Vitis (Vitaceae) based on complete chloroplast genome sequences: effects of taxon sampling and phylogenetic methods on resolving relationships among rosids.</title>
        <authorList>
            <person name="Jansen R.K."/>
            <person name="Kaittanis C."/>
            <person name="Lee S.-B."/>
            <person name="Saski C."/>
            <person name="Tomkins J."/>
            <person name="Alverson A.J."/>
            <person name="Daniell H."/>
        </authorList>
    </citation>
    <scope>NUCLEOTIDE SEQUENCE [LARGE SCALE GENOMIC DNA]</scope>
    <source>
        <strain>cv. Maxxa</strain>
    </source>
</reference>
<geneLocation type="chloroplast"/>
<protein>
    <recommendedName>
        <fullName evidence="1">Photosystem II CP47 reaction center protein</fullName>
    </recommendedName>
    <alternativeName>
        <fullName evidence="1">PSII 47 kDa protein</fullName>
    </alternativeName>
    <alternativeName>
        <fullName evidence="1">Protein CP-47</fullName>
    </alternativeName>
</protein>
<proteinExistence type="inferred from homology"/>